<proteinExistence type="inferred from homology"/>
<dbReference type="EC" id="2.7.8.7" evidence="1"/>
<dbReference type="EMBL" id="CP000538">
    <property type="protein sequence ID" value="EAQ72688.1"/>
    <property type="molecule type" value="Genomic_DNA"/>
</dbReference>
<dbReference type="RefSeq" id="WP_002825806.1">
    <property type="nucleotide sequence ID" value="NC_008787.1"/>
</dbReference>
<dbReference type="SMR" id="A1W123"/>
<dbReference type="KEGG" id="cjj:CJJ81176_1408"/>
<dbReference type="eggNOG" id="COG0736">
    <property type="taxonomic scope" value="Bacteria"/>
</dbReference>
<dbReference type="HOGENOM" id="CLU_089696_0_2_7"/>
<dbReference type="Proteomes" id="UP000000646">
    <property type="component" value="Chromosome"/>
</dbReference>
<dbReference type="GO" id="GO:0005737">
    <property type="term" value="C:cytoplasm"/>
    <property type="evidence" value="ECO:0007669"/>
    <property type="project" value="UniProtKB-SubCell"/>
</dbReference>
<dbReference type="GO" id="GO:0008897">
    <property type="term" value="F:holo-[acyl-carrier-protein] synthase activity"/>
    <property type="evidence" value="ECO:0007669"/>
    <property type="project" value="UniProtKB-UniRule"/>
</dbReference>
<dbReference type="GO" id="GO:0000287">
    <property type="term" value="F:magnesium ion binding"/>
    <property type="evidence" value="ECO:0007669"/>
    <property type="project" value="UniProtKB-UniRule"/>
</dbReference>
<dbReference type="GO" id="GO:0006633">
    <property type="term" value="P:fatty acid biosynthetic process"/>
    <property type="evidence" value="ECO:0007669"/>
    <property type="project" value="UniProtKB-UniRule"/>
</dbReference>
<dbReference type="Gene3D" id="3.90.470.20">
    <property type="entry name" value="4'-phosphopantetheinyl transferase domain"/>
    <property type="match status" value="1"/>
</dbReference>
<dbReference type="HAMAP" id="MF_00101">
    <property type="entry name" value="AcpS"/>
    <property type="match status" value="1"/>
</dbReference>
<dbReference type="InterPro" id="IPR008278">
    <property type="entry name" value="4-PPantetheinyl_Trfase_dom"/>
</dbReference>
<dbReference type="InterPro" id="IPR037143">
    <property type="entry name" value="4-PPantetheinyl_Trfase_dom_sf"/>
</dbReference>
<dbReference type="InterPro" id="IPR002582">
    <property type="entry name" value="ACPS"/>
</dbReference>
<dbReference type="InterPro" id="IPR004568">
    <property type="entry name" value="Ppantetheine-prot_Trfase_dom"/>
</dbReference>
<dbReference type="NCBIfam" id="TIGR00516">
    <property type="entry name" value="acpS"/>
    <property type="match status" value="1"/>
</dbReference>
<dbReference type="NCBIfam" id="TIGR00556">
    <property type="entry name" value="pantethn_trn"/>
    <property type="match status" value="1"/>
</dbReference>
<dbReference type="Pfam" id="PF01648">
    <property type="entry name" value="ACPS"/>
    <property type="match status" value="1"/>
</dbReference>
<dbReference type="SUPFAM" id="SSF56214">
    <property type="entry name" value="4'-phosphopantetheinyl transferase"/>
    <property type="match status" value="1"/>
</dbReference>
<sequence length="115" mass="12645">MRVGCDIIAISRIEKIHSRHGKNFLDKFLSPKEQILIKNPATLAGLWAAKEAASKALGVGICELCSFFDIEISKDEKNAPKLKYSQKITKDFNITQTSLSISHDNGFAIAIVAIV</sequence>
<keyword id="KW-0963">Cytoplasm</keyword>
<keyword id="KW-0275">Fatty acid biosynthesis</keyword>
<keyword id="KW-0276">Fatty acid metabolism</keyword>
<keyword id="KW-0444">Lipid biosynthesis</keyword>
<keyword id="KW-0443">Lipid metabolism</keyword>
<keyword id="KW-0460">Magnesium</keyword>
<keyword id="KW-0479">Metal-binding</keyword>
<keyword id="KW-0808">Transferase</keyword>
<reference key="1">
    <citation type="submission" date="2006-12" db="EMBL/GenBank/DDBJ databases">
        <authorList>
            <person name="Fouts D.E."/>
            <person name="Nelson K.E."/>
            <person name="Sebastian Y."/>
        </authorList>
    </citation>
    <scope>NUCLEOTIDE SEQUENCE [LARGE SCALE GENOMIC DNA]</scope>
    <source>
        <strain>81-176</strain>
    </source>
</reference>
<gene>
    <name evidence="1" type="primary">acpS</name>
    <name type="ordered locus">CJJ81176_1408</name>
</gene>
<name>ACPS_CAMJJ</name>
<protein>
    <recommendedName>
        <fullName evidence="1">Holo-[acyl-carrier-protein] synthase</fullName>
        <shortName evidence="1">Holo-ACP synthase</shortName>
        <ecNumber evidence="1">2.7.8.7</ecNumber>
    </recommendedName>
    <alternativeName>
        <fullName evidence="1">4'-phosphopantetheinyl transferase AcpS</fullName>
    </alternativeName>
</protein>
<evidence type="ECO:0000255" key="1">
    <source>
        <dbReference type="HAMAP-Rule" id="MF_00101"/>
    </source>
</evidence>
<comment type="function">
    <text evidence="1">Transfers the 4'-phosphopantetheine moiety from coenzyme A to a Ser of acyl-carrier-protein.</text>
</comment>
<comment type="catalytic activity">
    <reaction evidence="1">
        <text>apo-[ACP] + CoA = holo-[ACP] + adenosine 3',5'-bisphosphate + H(+)</text>
        <dbReference type="Rhea" id="RHEA:12068"/>
        <dbReference type="Rhea" id="RHEA-COMP:9685"/>
        <dbReference type="Rhea" id="RHEA-COMP:9690"/>
        <dbReference type="ChEBI" id="CHEBI:15378"/>
        <dbReference type="ChEBI" id="CHEBI:29999"/>
        <dbReference type="ChEBI" id="CHEBI:57287"/>
        <dbReference type="ChEBI" id="CHEBI:58343"/>
        <dbReference type="ChEBI" id="CHEBI:64479"/>
        <dbReference type="EC" id="2.7.8.7"/>
    </reaction>
</comment>
<comment type="cofactor">
    <cofactor evidence="1">
        <name>Mg(2+)</name>
        <dbReference type="ChEBI" id="CHEBI:18420"/>
    </cofactor>
</comment>
<comment type="subcellular location">
    <subcellularLocation>
        <location evidence="1">Cytoplasm</location>
    </subcellularLocation>
</comment>
<comment type="similarity">
    <text evidence="1">Belongs to the P-Pant transferase superfamily. AcpS family.</text>
</comment>
<accession>A1W123</accession>
<feature type="chain" id="PRO_1000008410" description="Holo-[acyl-carrier-protein] synthase">
    <location>
        <begin position="1"/>
        <end position="115"/>
    </location>
</feature>
<feature type="binding site" evidence="1">
    <location>
        <position position="6"/>
    </location>
    <ligand>
        <name>Mg(2+)</name>
        <dbReference type="ChEBI" id="CHEBI:18420"/>
    </ligand>
</feature>
<feature type="binding site" evidence="1">
    <location>
        <position position="51"/>
    </location>
    <ligand>
        <name>Mg(2+)</name>
        <dbReference type="ChEBI" id="CHEBI:18420"/>
    </ligand>
</feature>
<organism>
    <name type="scientific">Campylobacter jejuni subsp. jejuni serotype O:23/36 (strain 81-176)</name>
    <dbReference type="NCBI Taxonomy" id="354242"/>
    <lineage>
        <taxon>Bacteria</taxon>
        <taxon>Pseudomonadati</taxon>
        <taxon>Campylobacterota</taxon>
        <taxon>Epsilonproteobacteria</taxon>
        <taxon>Campylobacterales</taxon>
        <taxon>Campylobacteraceae</taxon>
        <taxon>Campylobacter</taxon>
    </lineage>
</organism>